<accession>P44938</accession>
<sequence length="239" mass="27343">MIELDQTNIPKHVAIIMDGNGRWAKQKNKMRIFGHTNGVTAVRKAVAYARQIGVEVLTLYAFSSENWSRPEQEISALMSLFMQALDREVKKLHKNNICLKIIGDVSRFSETLQEKIKKAENLTEKNTALTLNIAANYGGCWDIIQAAKQIAEKVKKEEMSVSDINNSTFQHHLATQNAPPVDLLIRTSGEQRISNFLLWQIAYAELYFSDVLWPDFNQLEFNRAIASYQQRHRRFGGTE</sequence>
<evidence type="ECO:0000255" key="1">
    <source>
        <dbReference type="HAMAP-Rule" id="MF_01139"/>
    </source>
</evidence>
<name>UPPS_HAEIN</name>
<proteinExistence type="inferred from homology"/>
<protein>
    <recommendedName>
        <fullName evidence="1">Ditrans,polycis-undecaprenyl-diphosphate synthase ((2E,6E)-farnesyl-diphosphate specific)</fullName>
        <ecNumber evidence="1">2.5.1.31</ecNumber>
    </recommendedName>
    <alternativeName>
        <fullName evidence="1">Ditrans,polycis-undecaprenylcistransferase</fullName>
    </alternativeName>
    <alternativeName>
        <fullName evidence="1">Undecaprenyl diphosphate synthase</fullName>
        <shortName evidence="1">UDS</shortName>
    </alternativeName>
    <alternativeName>
        <fullName evidence="1">Undecaprenyl pyrophosphate synthase</fullName>
        <shortName evidence="1">UPP synthase</shortName>
    </alternativeName>
</protein>
<dbReference type="EC" id="2.5.1.31" evidence="1"/>
<dbReference type="EMBL" id="L42023">
    <property type="protein sequence ID" value="AAC22578.1"/>
    <property type="molecule type" value="Genomic_DNA"/>
</dbReference>
<dbReference type="PIR" id="E64161">
    <property type="entry name" value="E64161"/>
</dbReference>
<dbReference type="RefSeq" id="NP_439080.1">
    <property type="nucleotide sequence ID" value="NC_000907.1"/>
</dbReference>
<dbReference type="SMR" id="P44938"/>
<dbReference type="STRING" id="71421.HI_0920"/>
<dbReference type="EnsemblBacteria" id="AAC22578">
    <property type="protein sequence ID" value="AAC22578"/>
    <property type="gene ID" value="HI_0920"/>
</dbReference>
<dbReference type="KEGG" id="hin:HI_0920"/>
<dbReference type="PATRIC" id="fig|71421.8.peg.961"/>
<dbReference type="eggNOG" id="COG0020">
    <property type="taxonomic scope" value="Bacteria"/>
</dbReference>
<dbReference type="HOGENOM" id="CLU_038505_1_1_6"/>
<dbReference type="OrthoDB" id="4191603at2"/>
<dbReference type="PhylomeDB" id="P44938"/>
<dbReference type="BioCyc" id="HINF71421:G1GJ1-959-MONOMER"/>
<dbReference type="BRENDA" id="2.5.1.31">
    <property type="organism ID" value="2529"/>
</dbReference>
<dbReference type="Proteomes" id="UP000000579">
    <property type="component" value="Chromosome"/>
</dbReference>
<dbReference type="GO" id="GO:0005829">
    <property type="term" value="C:cytosol"/>
    <property type="evidence" value="ECO:0000318"/>
    <property type="project" value="GO_Central"/>
</dbReference>
<dbReference type="GO" id="GO:0008834">
    <property type="term" value="F:ditrans,polycis-undecaprenyl-diphosphate synthase [(2E,6E)-farnesyl-diphosphate specific] activity"/>
    <property type="evidence" value="ECO:0000318"/>
    <property type="project" value="GO_Central"/>
</dbReference>
<dbReference type="GO" id="GO:0000287">
    <property type="term" value="F:magnesium ion binding"/>
    <property type="evidence" value="ECO:0000318"/>
    <property type="project" value="GO_Central"/>
</dbReference>
<dbReference type="GO" id="GO:0071555">
    <property type="term" value="P:cell wall organization"/>
    <property type="evidence" value="ECO:0007669"/>
    <property type="project" value="UniProtKB-KW"/>
</dbReference>
<dbReference type="GO" id="GO:0009252">
    <property type="term" value="P:peptidoglycan biosynthetic process"/>
    <property type="evidence" value="ECO:0007669"/>
    <property type="project" value="UniProtKB-UniRule"/>
</dbReference>
<dbReference type="GO" id="GO:0016094">
    <property type="term" value="P:polyprenol biosynthetic process"/>
    <property type="evidence" value="ECO:0000318"/>
    <property type="project" value="GO_Central"/>
</dbReference>
<dbReference type="GO" id="GO:0008360">
    <property type="term" value="P:regulation of cell shape"/>
    <property type="evidence" value="ECO:0007669"/>
    <property type="project" value="UniProtKB-KW"/>
</dbReference>
<dbReference type="CDD" id="cd00475">
    <property type="entry name" value="Cis_IPPS"/>
    <property type="match status" value="1"/>
</dbReference>
<dbReference type="FunFam" id="3.40.1180.10:FF:000001">
    <property type="entry name" value="(2E,6E)-farnesyl-diphosphate-specific ditrans,polycis-undecaprenyl-diphosphate synthase"/>
    <property type="match status" value="1"/>
</dbReference>
<dbReference type="Gene3D" id="3.40.1180.10">
    <property type="entry name" value="Decaprenyl diphosphate synthase-like"/>
    <property type="match status" value="1"/>
</dbReference>
<dbReference type="HAMAP" id="MF_01139">
    <property type="entry name" value="ISPT"/>
    <property type="match status" value="1"/>
</dbReference>
<dbReference type="InterPro" id="IPR001441">
    <property type="entry name" value="UPP_synth-like"/>
</dbReference>
<dbReference type="InterPro" id="IPR018520">
    <property type="entry name" value="UPP_synth-like_CS"/>
</dbReference>
<dbReference type="InterPro" id="IPR036424">
    <property type="entry name" value="UPP_synth-like_sf"/>
</dbReference>
<dbReference type="NCBIfam" id="NF011405">
    <property type="entry name" value="PRK14830.1"/>
    <property type="match status" value="1"/>
</dbReference>
<dbReference type="NCBIfam" id="TIGR00055">
    <property type="entry name" value="uppS"/>
    <property type="match status" value="1"/>
</dbReference>
<dbReference type="PANTHER" id="PTHR10291:SF0">
    <property type="entry name" value="DEHYDRODOLICHYL DIPHOSPHATE SYNTHASE 2"/>
    <property type="match status" value="1"/>
</dbReference>
<dbReference type="PANTHER" id="PTHR10291">
    <property type="entry name" value="DEHYDRODOLICHYL DIPHOSPHATE SYNTHASE FAMILY MEMBER"/>
    <property type="match status" value="1"/>
</dbReference>
<dbReference type="Pfam" id="PF01255">
    <property type="entry name" value="Prenyltransf"/>
    <property type="match status" value="1"/>
</dbReference>
<dbReference type="SUPFAM" id="SSF64005">
    <property type="entry name" value="Undecaprenyl diphosphate synthase"/>
    <property type="match status" value="1"/>
</dbReference>
<dbReference type="PROSITE" id="PS01066">
    <property type="entry name" value="UPP_SYNTHASE"/>
    <property type="match status" value="1"/>
</dbReference>
<keyword id="KW-0133">Cell shape</keyword>
<keyword id="KW-0961">Cell wall biogenesis/degradation</keyword>
<keyword id="KW-0460">Magnesium</keyword>
<keyword id="KW-0479">Metal-binding</keyword>
<keyword id="KW-0573">Peptidoglycan synthesis</keyword>
<keyword id="KW-1185">Reference proteome</keyword>
<keyword id="KW-0808">Transferase</keyword>
<comment type="function">
    <text evidence="1">Catalyzes the sequential condensation of isopentenyl diphosphate (IPP) with (2E,6E)-farnesyl diphosphate (E,E-FPP) to yield (2Z,6Z,10Z,14Z,18Z,22Z,26Z,30Z,34E,38E)-undecaprenyl diphosphate (di-trans,octa-cis-UPP). UPP is the precursor of glycosyl carrier lipid in the biosynthesis of bacterial cell wall polysaccharide components such as peptidoglycan and lipopolysaccharide.</text>
</comment>
<comment type="catalytic activity">
    <reaction evidence="1">
        <text>8 isopentenyl diphosphate + (2E,6E)-farnesyl diphosphate = di-trans,octa-cis-undecaprenyl diphosphate + 8 diphosphate</text>
        <dbReference type="Rhea" id="RHEA:27551"/>
        <dbReference type="ChEBI" id="CHEBI:33019"/>
        <dbReference type="ChEBI" id="CHEBI:58405"/>
        <dbReference type="ChEBI" id="CHEBI:128769"/>
        <dbReference type="ChEBI" id="CHEBI:175763"/>
        <dbReference type="EC" id="2.5.1.31"/>
    </reaction>
</comment>
<comment type="cofactor">
    <cofactor evidence="1">
        <name>Mg(2+)</name>
        <dbReference type="ChEBI" id="CHEBI:18420"/>
    </cofactor>
    <text evidence="1">Binds 2 magnesium ions per subunit.</text>
</comment>
<comment type="subunit">
    <text evidence="1">Homodimer.</text>
</comment>
<comment type="similarity">
    <text evidence="1">Belongs to the UPP synthase family.</text>
</comment>
<feature type="chain" id="PRO_0000123620" description="Ditrans,polycis-undecaprenyl-diphosphate synthase ((2E,6E)-farnesyl-diphosphate specific)">
    <location>
        <begin position="1"/>
        <end position="239"/>
    </location>
</feature>
<feature type="active site" evidence="1">
    <location>
        <position position="18"/>
    </location>
</feature>
<feature type="active site" description="Proton acceptor" evidence="1">
    <location>
        <position position="66"/>
    </location>
</feature>
<feature type="binding site" evidence="1">
    <location>
        <position position="18"/>
    </location>
    <ligand>
        <name>Mg(2+)</name>
        <dbReference type="ChEBI" id="CHEBI:18420"/>
    </ligand>
</feature>
<feature type="binding site" evidence="1">
    <location>
        <begin position="19"/>
        <end position="22"/>
    </location>
    <ligand>
        <name>substrate</name>
    </ligand>
</feature>
<feature type="binding site" evidence="1">
    <location>
        <position position="23"/>
    </location>
    <ligand>
        <name>substrate</name>
    </ligand>
</feature>
<feature type="binding site" evidence="1">
    <location>
        <position position="31"/>
    </location>
    <ligand>
        <name>substrate</name>
    </ligand>
</feature>
<feature type="binding site" evidence="1">
    <location>
        <position position="35"/>
    </location>
    <ligand>
        <name>substrate</name>
    </ligand>
</feature>
<feature type="binding site" evidence="1">
    <location>
        <begin position="63"/>
        <end position="65"/>
    </location>
    <ligand>
        <name>substrate</name>
    </ligand>
</feature>
<feature type="binding site" evidence="1">
    <location>
        <position position="67"/>
    </location>
    <ligand>
        <name>substrate</name>
    </ligand>
</feature>
<feature type="binding site" evidence="1">
    <location>
        <position position="69"/>
    </location>
    <ligand>
        <name>substrate</name>
    </ligand>
</feature>
<feature type="binding site" evidence="1">
    <location>
        <position position="186"/>
    </location>
    <ligand>
        <name>substrate</name>
    </ligand>
</feature>
<feature type="binding site" evidence="1">
    <location>
        <begin position="192"/>
        <end position="194"/>
    </location>
    <ligand>
        <name>substrate</name>
    </ligand>
</feature>
<feature type="binding site" evidence="1">
    <location>
        <position position="205"/>
    </location>
    <ligand>
        <name>Mg(2+)</name>
        <dbReference type="ChEBI" id="CHEBI:18420"/>
    </ligand>
</feature>
<reference key="1">
    <citation type="journal article" date="1995" name="Science">
        <title>Whole-genome random sequencing and assembly of Haemophilus influenzae Rd.</title>
        <authorList>
            <person name="Fleischmann R.D."/>
            <person name="Adams M.D."/>
            <person name="White O."/>
            <person name="Clayton R.A."/>
            <person name="Kirkness E.F."/>
            <person name="Kerlavage A.R."/>
            <person name="Bult C.J."/>
            <person name="Tomb J.-F."/>
            <person name="Dougherty B.A."/>
            <person name="Merrick J.M."/>
            <person name="McKenney K."/>
            <person name="Sutton G.G."/>
            <person name="FitzHugh W."/>
            <person name="Fields C.A."/>
            <person name="Gocayne J.D."/>
            <person name="Scott J.D."/>
            <person name="Shirley R."/>
            <person name="Liu L.-I."/>
            <person name="Glodek A."/>
            <person name="Kelley J.M."/>
            <person name="Weidman J.F."/>
            <person name="Phillips C.A."/>
            <person name="Spriggs T."/>
            <person name="Hedblom E."/>
            <person name="Cotton M.D."/>
            <person name="Utterback T.R."/>
            <person name="Hanna M.C."/>
            <person name="Nguyen D.T."/>
            <person name="Saudek D.M."/>
            <person name="Brandon R.C."/>
            <person name="Fine L.D."/>
            <person name="Fritchman J.L."/>
            <person name="Fuhrmann J.L."/>
            <person name="Geoghagen N.S.M."/>
            <person name="Gnehm C.L."/>
            <person name="McDonald L.A."/>
            <person name="Small K.V."/>
            <person name="Fraser C.M."/>
            <person name="Smith H.O."/>
            <person name="Venter J.C."/>
        </authorList>
    </citation>
    <scope>NUCLEOTIDE SEQUENCE [LARGE SCALE GENOMIC DNA]</scope>
    <source>
        <strain>ATCC 51907 / DSM 11121 / KW20 / Rd</strain>
    </source>
</reference>
<gene>
    <name evidence="1" type="primary">uppS</name>
    <name type="ordered locus">HI_0920</name>
</gene>
<organism>
    <name type="scientific">Haemophilus influenzae (strain ATCC 51907 / DSM 11121 / KW20 / Rd)</name>
    <dbReference type="NCBI Taxonomy" id="71421"/>
    <lineage>
        <taxon>Bacteria</taxon>
        <taxon>Pseudomonadati</taxon>
        <taxon>Pseudomonadota</taxon>
        <taxon>Gammaproteobacteria</taxon>
        <taxon>Pasteurellales</taxon>
        <taxon>Pasteurellaceae</taxon>
        <taxon>Haemophilus</taxon>
    </lineage>
</organism>